<reference key="1">
    <citation type="journal article" date="2007" name="PLoS ONE">
        <title>A glimpse of streptococcal toxic shock syndrome from comparative genomics of S. suis 2 Chinese isolates.</title>
        <authorList>
            <person name="Chen C."/>
            <person name="Tang J."/>
            <person name="Dong W."/>
            <person name="Wang C."/>
            <person name="Feng Y."/>
            <person name="Wang J."/>
            <person name="Zheng F."/>
            <person name="Pan X."/>
            <person name="Liu D."/>
            <person name="Li M."/>
            <person name="Song Y."/>
            <person name="Zhu X."/>
            <person name="Sun H."/>
            <person name="Feng T."/>
            <person name="Guo Z."/>
            <person name="Ju A."/>
            <person name="Ge J."/>
            <person name="Dong Y."/>
            <person name="Sun W."/>
            <person name="Jiang Y."/>
            <person name="Wang J."/>
            <person name="Yan J."/>
            <person name="Yang H."/>
            <person name="Wang X."/>
            <person name="Gao G.F."/>
            <person name="Yang R."/>
            <person name="Wang J."/>
            <person name="Yu J."/>
        </authorList>
    </citation>
    <scope>NUCLEOTIDE SEQUENCE [LARGE SCALE GENOMIC DNA]</scope>
    <source>
        <strain>05ZYH33</strain>
    </source>
</reference>
<comment type="similarity">
    <text evidence="1">Belongs to the universal ribosomal protein uL29 family.</text>
</comment>
<organism>
    <name type="scientific">Streptococcus suis (strain 05ZYH33)</name>
    <dbReference type="NCBI Taxonomy" id="391295"/>
    <lineage>
        <taxon>Bacteria</taxon>
        <taxon>Bacillati</taxon>
        <taxon>Bacillota</taxon>
        <taxon>Bacilli</taxon>
        <taxon>Lactobacillales</taxon>
        <taxon>Streptococcaceae</taxon>
        <taxon>Streptococcus</taxon>
    </lineage>
</organism>
<name>RL29_STRSY</name>
<accession>A4VSG2</accession>
<gene>
    <name evidence="1" type="primary">rpmC</name>
    <name type="ordered locus">SSU05_0079</name>
</gene>
<protein>
    <recommendedName>
        <fullName evidence="1">Large ribosomal subunit protein uL29</fullName>
    </recommendedName>
    <alternativeName>
        <fullName evidence="2">50S ribosomal protein L29</fullName>
    </alternativeName>
</protein>
<dbReference type="EMBL" id="CP000407">
    <property type="protein sequence ID" value="ABP89051.1"/>
    <property type="molecule type" value="Genomic_DNA"/>
</dbReference>
<dbReference type="SMR" id="A4VSG2"/>
<dbReference type="STRING" id="391295.SSU05_0079"/>
<dbReference type="KEGG" id="ssu:SSU05_0079"/>
<dbReference type="eggNOG" id="COG0255">
    <property type="taxonomic scope" value="Bacteria"/>
</dbReference>
<dbReference type="HOGENOM" id="CLU_158491_5_2_9"/>
<dbReference type="GO" id="GO:0022625">
    <property type="term" value="C:cytosolic large ribosomal subunit"/>
    <property type="evidence" value="ECO:0007669"/>
    <property type="project" value="TreeGrafter"/>
</dbReference>
<dbReference type="GO" id="GO:0003735">
    <property type="term" value="F:structural constituent of ribosome"/>
    <property type="evidence" value="ECO:0007669"/>
    <property type="project" value="InterPro"/>
</dbReference>
<dbReference type="GO" id="GO:0006412">
    <property type="term" value="P:translation"/>
    <property type="evidence" value="ECO:0007669"/>
    <property type="project" value="UniProtKB-UniRule"/>
</dbReference>
<dbReference type="CDD" id="cd00427">
    <property type="entry name" value="Ribosomal_L29_HIP"/>
    <property type="match status" value="1"/>
</dbReference>
<dbReference type="FunFam" id="1.10.287.310:FF:000001">
    <property type="entry name" value="50S ribosomal protein L29"/>
    <property type="match status" value="1"/>
</dbReference>
<dbReference type="Gene3D" id="1.10.287.310">
    <property type="match status" value="1"/>
</dbReference>
<dbReference type="HAMAP" id="MF_00374">
    <property type="entry name" value="Ribosomal_uL29"/>
    <property type="match status" value="1"/>
</dbReference>
<dbReference type="InterPro" id="IPR050063">
    <property type="entry name" value="Ribosomal_protein_uL29"/>
</dbReference>
<dbReference type="InterPro" id="IPR001854">
    <property type="entry name" value="Ribosomal_uL29"/>
</dbReference>
<dbReference type="InterPro" id="IPR018254">
    <property type="entry name" value="Ribosomal_uL29_CS"/>
</dbReference>
<dbReference type="InterPro" id="IPR036049">
    <property type="entry name" value="Ribosomal_uL29_sf"/>
</dbReference>
<dbReference type="NCBIfam" id="TIGR00012">
    <property type="entry name" value="L29"/>
    <property type="match status" value="1"/>
</dbReference>
<dbReference type="PANTHER" id="PTHR10916">
    <property type="entry name" value="60S RIBOSOMAL PROTEIN L35/50S RIBOSOMAL PROTEIN L29"/>
    <property type="match status" value="1"/>
</dbReference>
<dbReference type="PANTHER" id="PTHR10916:SF0">
    <property type="entry name" value="LARGE RIBOSOMAL SUBUNIT PROTEIN UL29C"/>
    <property type="match status" value="1"/>
</dbReference>
<dbReference type="Pfam" id="PF00831">
    <property type="entry name" value="Ribosomal_L29"/>
    <property type="match status" value="1"/>
</dbReference>
<dbReference type="SUPFAM" id="SSF46561">
    <property type="entry name" value="Ribosomal protein L29 (L29p)"/>
    <property type="match status" value="1"/>
</dbReference>
<dbReference type="PROSITE" id="PS00579">
    <property type="entry name" value="RIBOSOMAL_L29"/>
    <property type="match status" value="1"/>
</dbReference>
<sequence length="68" mass="7959">MKLQEIKDFVKELRGLSQEELAKKENELKKELFELRFQAAAGQLEQTARLNEVKKQIARIKTVQSETK</sequence>
<feature type="chain" id="PRO_1000007632" description="Large ribosomal subunit protein uL29">
    <location>
        <begin position="1"/>
        <end position="68"/>
    </location>
</feature>
<proteinExistence type="inferred from homology"/>
<evidence type="ECO:0000255" key="1">
    <source>
        <dbReference type="HAMAP-Rule" id="MF_00374"/>
    </source>
</evidence>
<evidence type="ECO:0000305" key="2"/>
<keyword id="KW-0687">Ribonucleoprotein</keyword>
<keyword id="KW-0689">Ribosomal protein</keyword>